<evidence type="ECO:0000255" key="1">
    <source>
        <dbReference type="HAMAP-Rule" id="MF_00064"/>
    </source>
</evidence>
<feature type="chain" id="PRO_1000057440" description="Sulfate adenylyltransferase subunit 2">
    <location>
        <begin position="1"/>
        <end position="302"/>
    </location>
</feature>
<proteinExistence type="inferred from homology"/>
<keyword id="KW-0067">ATP-binding</keyword>
<keyword id="KW-0547">Nucleotide-binding</keyword>
<keyword id="KW-0548">Nucleotidyltransferase</keyword>
<keyword id="KW-0808">Transferase</keyword>
<reference key="1">
    <citation type="journal article" date="2007" name="PLoS Genet.">
        <title>The complete genome sequence of Yersinia pseudotuberculosis IP31758, the causative agent of Far East scarlet-like fever.</title>
        <authorList>
            <person name="Eppinger M."/>
            <person name="Rosovitz M.J."/>
            <person name="Fricke W.F."/>
            <person name="Rasko D.A."/>
            <person name="Kokorina G."/>
            <person name="Fayolle C."/>
            <person name="Lindler L.E."/>
            <person name="Carniel E."/>
            <person name="Ravel J."/>
        </authorList>
    </citation>
    <scope>NUCLEOTIDE SEQUENCE [LARGE SCALE GENOMIC DNA]</scope>
    <source>
        <strain>IP 31758</strain>
    </source>
</reference>
<protein>
    <recommendedName>
        <fullName evidence="1">Sulfate adenylyltransferase subunit 2</fullName>
        <ecNumber evidence="1">2.7.7.4</ecNumber>
    </recommendedName>
    <alternativeName>
        <fullName evidence="1">ATP-sulfurylase small subunit</fullName>
    </alternativeName>
    <alternativeName>
        <fullName evidence="1">Sulfate adenylate transferase</fullName>
        <shortName evidence="1">SAT</shortName>
    </alternativeName>
</protein>
<name>CYSD_YERP3</name>
<gene>
    <name evidence="1" type="primary">cysD</name>
    <name type="ordered locus">YpsIP31758_3304</name>
</gene>
<comment type="function">
    <text evidence="1">With CysN forms the ATP sulfurylase (ATPS) that catalyzes the adenylation of sulfate producing adenosine 5'-phosphosulfate (APS) and diphosphate, the first enzymatic step in sulfur assimilation pathway. APS synthesis involves the formation of a high-energy phosphoric-sulfuric acid anhydride bond driven by GTP hydrolysis by CysN coupled to ATP hydrolysis by CysD.</text>
</comment>
<comment type="catalytic activity">
    <reaction evidence="1">
        <text>sulfate + ATP + H(+) = adenosine 5'-phosphosulfate + diphosphate</text>
        <dbReference type="Rhea" id="RHEA:18133"/>
        <dbReference type="ChEBI" id="CHEBI:15378"/>
        <dbReference type="ChEBI" id="CHEBI:16189"/>
        <dbReference type="ChEBI" id="CHEBI:30616"/>
        <dbReference type="ChEBI" id="CHEBI:33019"/>
        <dbReference type="ChEBI" id="CHEBI:58243"/>
        <dbReference type="EC" id="2.7.7.4"/>
    </reaction>
</comment>
<comment type="pathway">
    <text evidence="1">Sulfur metabolism; hydrogen sulfide biosynthesis; sulfite from sulfate: step 1/3.</text>
</comment>
<comment type="subunit">
    <text evidence="1">Heterodimer composed of CysD, the smaller subunit, and CysN.</text>
</comment>
<comment type="similarity">
    <text evidence="1">Belongs to the PAPS reductase family. CysD subfamily.</text>
</comment>
<organism>
    <name type="scientific">Yersinia pseudotuberculosis serotype O:1b (strain IP 31758)</name>
    <dbReference type="NCBI Taxonomy" id="349747"/>
    <lineage>
        <taxon>Bacteria</taxon>
        <taxon>Pseudomonadati</taxon>
        <taxon>Pseudomonadota</taxon>
        <taxon>Gammaproteobacteria</taxon>
        <taxon>Enterobacterales</taxon>
        <taxon>Yersiniaceae</taxon>
        <taxon>Yersinia</taxon>
    </lineage>
</organism>
<accession>A7FLY3</accession>
<dbReference type="EC" id="2.7.7.4" evidence="1"/>
<dbReference type="EMBL" id="CP000720">
    <property type="protein sequence ID" value="ABS46543.1"/>
    <property type="molecule type" value="Genomic_DNA"/>
</dbReference>
<dbReference type="RefSeq" id="WP_002209386.1">
    <property type="nucleotide sequence ID" value="NC_009708.1"/>
</dbReference>
<dbReference type="SMR" id="A7FLY3"/>
<dbReference type="GeneID" id="57975343"/>
<dbReference type="KEGG" id="ypi:YpsIP31758_3304"/>
<dbReference type="HOGENOM" id="CLU_043026_0_0_6"/>
<dbReference type="UniPathway" id="UPA00140">
    <property type="reaction ID" value="UER00204"/>
</dbReference>
<dbReference type="Proteomes" id="UP000002412">
    <property type="component" value="Chromosome"/>
</dbReference>
<dbReference type="GO" id="GO:0005524">
    <property type="term" value="F:ATP binding"/>
    <property type="evidence" value="ECO:0007669"/>
    <property type="project" value="UniProtKB-KW"/>
</dbReference>
<dbReference type="GO" id="GO:0004781">
    <property type="term" value="F:sulfate adenylyltransferase (ATP) activity"/>
    <property type="evidence" value="ECO:0007669"/>
    <property type="project" value="UniProtKB-UniRule"/>
</dbReference>
<dbReference type="GO" id="GO:0070814">
    <property type="term" value="P:hydrogen sulfide biosynthetic process"/>
    <property type="evidence" value="ECO:0007669"/>
    <property type="project" value="UniProtKB-UniRule"/>
</dbReference>
<dbReference type="GO" id="GO:0000103">
    <property type="term" value="P:sulfate assimilation"/>
    <property type="evidence" value="ECO:0007669"/>
    <property type="project" value="UniProtKB-UniRule"/>
</dbReference>
<dbReference type="CDD" id="cd23946">
    <property type="entry name" value="Sulfate_adenylyltransferase_2"/>
    <property type="match status" value="1"/>
</dbReference>
<dbReference type="FunFam" id="3.40.50.620:FF:000002">
    <property type="entry name" value="Sulfate adenylyltransferase subunit 2"/>
    <property type="match status" value="1"/>
</dbReference>
<dbReference type="Gene3D" id="3.40.50.620">
    <property type="entry name" value="HUPs"/>
    <property type="match status" value="1"/>
</dbReference>
<dbReference type="HAMAP" id="MF_00064">
    <property type="entry name" value="Sulf_adenylyltr_sub2"/>
    <property type="match status" value="1"/>
</dbReference>
<dbReference type="InterPro" id="IPR002500">
    <property type="entry name" value="PAPS_reduct_dom"/>
</dbReference>
<dbReference type="InterPro" id="IPR014729">
    <property type="entry name" value="Rossmann-like_a/b/a_fold"/>
</dbReference>
<dbReference type="InterPro" id="IPR011784">
    <property type="entry name" value="SO4_adenylTrfase_ssu"/>
</dbReference>
<dbReference type="InterPro" id="IPR050128">
    <property type="entry name" value="Sulfate_adenylyltrnsfr_sub2"/>
</dbReference>
<dbReference type="NCBIfam" id="TIGR02039">
    <property type="entry name" value="CysD"/>
    <property type="match status" value="1"/>
</dbReference>
<dbReference type="NCBIfam" id="NF003587">
    <property type="entry name" value="PRK05253.1"/>
    <property type="match status" value="1"/>
</dbReference>
<dbReference type="NCBIfam" id="NF009214">
    <property type="entry name" value="PRK12563.1"/>
    <property type="match status" value="1"/>
</dbReference>
<dbReference type="PANTHER" id="PTHR43196">
    <property type="entry name" value="SULFATE ADENYLYLTRANSFERASE SUBUNIT 2"/>
    <property type="match status" value="1"/>
</dbReference>
<dbReference type="PANTHER" id="PTHR43196:SF1">
    <property type="entry name" value="SULFATE ADENYLYLTRANSFERASE SUBUNIT 2"/>
    <property type="match status" value="1"/>
</dbReference>
<dbReference type="Pfam" id="PF01507">
    <property type="entry name" value="PAPS_reduct"/>
    <property type="match status" value="1"/>
</dbReference>
<dbReference type="PIRSF" id="PIRSF002936">
    <property type="entry name" value="CysDAde_trans"/>
    <property type="match status" value="1"/>
</dbReference>
<dbReference type="SUPFAM" id="SSF52402">
    <property type="entry name" value="Adenine nucleotide alpha hydrolases-like"/>
    <property type="match status" value="1"/>
</dbReference>
<sequence length="302" mass="35187">MDEKRLTHLRQLEAESIHIIREVAAEFGNPVMLYSIGKDSSVMLHLARKAFFPGHLPFPLLHVDTGWKFREMYEFRDHTVKEFGCELLVHRNPEGVAMGINPFVHGSAKHTDIMKTEGLKQALNKYGFDAAFGGARRDEEKSRAKERIYSFRDRFHRWDPKNQRPELWHNYNGQINKGESIRVFPLSNWTELDIWQYIFLEKIEIVPLYLAKPRPVVERDGMLLMVDDDRIDLQPGEVIVQKKVRFRTLGCWPLTGAVESEAETLPAIIEEMLISTTSERQGRMIDRDQSGSMELKKRQGYF</sequence>